<evidence type="ECO:0000250" key="1"/>
<evidence type="ECO:0000250" key="2">
    <source>
        <dbReference type="UniProtKB" id="P00403"/>
    </source>
</evidence>
<evidence type="ECO:0000250" key="3">
    <source>
        <dbReference type="UniProtKB" id="P00406"/>
    </source>
</evidence>
<evidence type="ECO:0000250" key="4">
    <source>
        <dbReference type="UniProtKB" id="P00410"/>
    </source>
</evidence>
<evidence type="ECO:0000250" key="5">
    <source>
        <dbReference type="UniProtKB" id="P68530"/>
    </source>
</evidence>
<evidence type="ECO:0000305" key="6"/>
<proteinExistence type="inferred from homology"/>
<geneLocation type="mitochondrion"/>
<keyword id="KW-0186">Copper</keyword>
<keyword id="KW-0249">Electron transport</keyword>
<keyword id="KW-0291">Formylation</keyword>
<keyword id="KW-0460">Magnesium</keyword>
<keyword id="KW-0472">Membrane</keyword>
<keyword id="KW-0479">Metal-binding</keyword>
<keyword id="KW-0496">Mitochondrion</keyword>
<keyword id="KW-0999">Mitochondrion inner membrane</keyword>
<keyword id="KW-0597">Phosphoprotein</keyword>
<keyword id="KW-1185">Reference proteome</keyword>
<keyword id="KW-0679">Respiratory chain</keyword>
<keyword id="KW-1278">Translocase</keyword>
<keyword id="KW-0812">Transmembrane</keyword>
<keyword id="KW-1133">Transmembrane helix</keyword>
<keyword id="KW-0813">Transport</keyword>
<feature type="chain" id="PRO_0000183513" description="Cytochrome c oxidase subunit 2">
    <location>
        <begin position="1"/>
        <end position="227"/>
    </location>
</feature>
<feature type="topological domain" description="Mitochondrial intermembrane" evidence="5">
    <location>
        <begin position="1"/>
        <end position="14"/>
    </location>
</feature>
<feature type="transmembrane region" description="Helical; Name=I" evidence="5">
    <location>
        <begin position="15"/>
        <end position="45"/>
    </location>
</feature>
<feature type="topological domain" description="Mitochondrial matrix" evidence="5">
    <location>
        <begin position="46"/>
        <end position="59"/>
    </location>
</feature>
<feature type="transmembrane region" description="Helical; Name=II" evidence="5">
    <location>
        <begin position="60"/>
        <end position="87"/>
    </location>
</feature>
<feature type="topological domain" description="Mitochondrial intermembrane" evidence="5">
    <location>
        <begin position="88"/>
        <end position="227"/>
    </location>
</feature>
<feature type="binding site" evidence="5">
    <location>
        <position position="161"/>
    </location>
    <ligand>
        <name>Cu cation</name>
        <dbReference type="ChEBI" id="CHEBI:23378"/>
        <label>A1</label>
    </ligand>
</feature>
<feature type="binding site" evidence="5">
    <location>
        <position position="196"/>
    </location>
    <ligand>
        <name>Cu cation</name>
        <dbReference type="ChEBI" id="CHEBI:23378"/>
        <label>A1</label>
    </ligand>
</feature>
<feature type="binding site" evidence="5">
    <location>
        <position position="196"/>
    </location>
    <ligand>
        <name>Cu cation</name>
        <dbReference type="ChEBI" id="CHEBI:23378"/>
        <label>A2</label>
    </ligand>
</feature>
<feature type="binding site" evidence="5">
    <location>
        <position position="198"/>
    </location>
    <ligand>
        <name>Cu cation</name>
        <dbReference type="ChEBI" id="CHEBI:23378"/>
        <label>A2</label>
    </ligand>
</feature>
<feature type="binding site" evidence="5">
    <location>
        <position position="198"/>
    </location>
    <ligand>
        <name>Mg(2+)</name>
        <dbReference type="ChEBI" id="CHEBI:18420"/>
        <note>ligand shared with MT-CO1</note>
    </ligand>
</feature>
<feature type="binding site" evidence="5">
    <location>
        <position position="200"/>
    </location>
    <ligand>
        <name>Cu cation</name>
        <dbReference type="ChEBI" id="CHEBI:23378"/>
        <label>A1</label>
    </ligand>
</feature>
<feature type="binding site" evidence="5">
    <location>
        <position position="200"/>
    </location>
    <ligand>
        <name>Cu cation</name>
        <dbReference type="ChEBI" id="CHEBI:23378"/>
        <label>A2</label>
    </ligand>
</feature>
<feature type="binding site" evidence="5">
    <location>
        <position position="204"/>
    </location>
    <ligand>
        <name>Cu cation</name>
        <dbReference type="ChEBI" id="CHEBI:23378"/>
        <label>A2</label>
    </ligand>
</feature>
<feature type="binding site" evidence="5">
    <location>
        <position position="207"/>
    </location>
    <ligand>
        <name>Cu cation</name>
        <dbReference type="ChEBI" id="CHEBI:23378"/>
        <label>A1</label>
    </ligand>
</feature>
<feature type="modified residue" description="N-formylmethionine" evidence="1">
    <location>
        <position position="1"/>
    </location>
</feature>
<feature type="modified residue" description="Phosphotyrosine" evidence="3">
    <location>
        <position position="218"/>
    </location>
</feature>
<reference key="1">
    <citation type="journal article" date="1995" name="J. Mol. Evol.">
        <title>Mammalian mitochondrial DNA evolution: a comparison of the cytochrome b and cytochrome c oxidase II genes.</title>
        <authorList>
            <person name="Honeycutt R.L."/>
            <person name="Nedbal M.A."/>
            <person name="Adkins R.M."/>
            <person name="Janecek L.L."/>
        </authorList>
    </citation>
    <scope>NUCLEOTIDE SEQUENCE [GENOMIC DNA]</scope>
</reference>
<reference key="2">
    <citation type="journal article" date="2002" name="Genetics">
        <title>Coexistence of Bos taurus and B. indicus mitochondrial DNAs in nuclear transfer-derived somatic cattle clones.</title>
        <authorList>
            <person name="Steinborn R."/>
            <person name="Schinogl P."/>
            <person name="Wells D.N."/>
            <person name="Bergthaler A."/>
            <person name="Mueller M."/>
            <person name="Brem G."/>
        </authorList>
    </citation>
    <scope>NUCLEOTIDE SEQUENCE [GENOMIC DNA]</scope>
    <source>
        <strain>Isolate Elisabeth</strain>
    </source>
</reference>
<reference key="3">
    <citation type="submission" date="2002-03" db="EMBL/GenBank/DDBJ databases">
        <title>Complete sequence of the Bos indicus mitochondrial genome.</title>
        <authorList>
            <person name="Hiendleder S."/>
            <person name="Lewalski H."/>
            <person name="Wolf E."/>
        </authorList>
    </citation>
    <scope>NUCLEOTIDE SEQUENCE [GENOMIC DNA]</scope>
    <source>
        <tissue>Liver</tissue>
    </source>
</reference>
<reference key="4">
    <citation type="submission" date="2002-06" db="EMBL/GenBank/DDBJ databases">
        <title>The complete mitochondrial genome nucleotide sequence of Bos indicus.</title>
        <authorList>
            <person name="Miretti M.M."/>
            <person name="Pereira H.A. Jr."/>
            <person name="Greggio C."/>
            <person name="Suzuki J. Jr."/>
            <person name="Ferro J.A."/>
            <person name="Ferro M.I."/>
            <person name="Meirelles F."/>
            <person name="Garcia J.M."/>
            <person name="Smith L.C."/>
        </authorList>
    </citation>
    <scope>NUCLEOTIDE SEQUENCE [GENOMIC DNA]</scope>
</reference>
<organism>
    <name type="scientific">Bos indicus</name>
    <name type="common">Zebu</name>
    <dbReference type="NCBI Taxonomy" id="9915"/>
    <lineage>
        <taxon>Eukaryota</taxon>
        <taxon>Metazoa</taxon>
        <taxon>Chordata</taxon>
        <taxon>Craniata</taxon>
        <taxon>Vertebrata</taxon>
        <taxon>Euteleostomi</taxon>
        <taxon>Mammalia</taxon>
        <taxon>Eutheria</taxon>
        <taxon>Laurasiatheria</taxon>
        <taxon>Artiodactyla</taxon>
        <taxon>Ruminantia</taxon>
        <taxon>Pecora</taxon>
        <taxon>Bovidae</taxon>
        <taxon>Bovinae</taxon>
        <taxon>Bos</taxon>
    </lineage>
</organism>
<gene>
    <name type="primary">MT-CO2</name>
    <name type="synonym">COII</name>
    <name type="synonym">COX2</name>
    <name type="synonym">COXII</name>
    <name type="synonym">MTCO2</name>
</gene>
<sequence>MAYPMQLGFQDATSPIMEELLHFHDHTLMIVFLISSLVLYIISLMLTTKLTHTSTMDAQEVETIWTILPAIILILIALPSLRILYMMDEINNPSLTVKTMGHQWYWSYEYTDYEDLSFDSYMIPTSELKPGELRLLEVDNRVVLPMEMTIRMLVSSEDVLHSWAVPSLGLKTDAIPGRLNQTTLMSSRPGLYYGQCSEICGSNHSFMPIVLELVPLKYFEKWSASML</sequence>
<protein>
    <recommendedName>
        <fullName>Cytochrome c oxidase subunit 2</fullName>
        <ecNumber>7.1.1.9</ecNumber>
    </recommendedName>
    <alternativeName>
        <fullName>Cytochrome c oxidase polypeptide II</fullName>
    </alternativeName>
</protein>
<accession>P68553</accession>
<accession>P00404</accession>
<accession>Q6EMS8</accession>
<comment type="function">
    <text evidence="4">Component of the cytochrome c oxidase, the last enzyme in the mitochondrial electron transport chain which drives oxidative phosphorylation. The respiratory chain contains 3 multisubunit complexes succinate dehydrogenase (complex II, CII), ubiquinol-cytochrome c oxidoreductase (cytochrome b-c1 complex, complex III, CIII) and cytochrome c oxidase (complex IV, CIV), that cooperate to transfer electrons derived from NADH and succinate to molecular oxygen, creating an electrochemical gradient over the inner membrane that drives transmembrane transport and the ATP synthase. Cytochrome c oxidase is the component of the respiratory chain that catalyzes the reduction of oxygen to water. Electrons originating from reduced cytochrome c in the intermembrane space (IMS) are transferred via the dinuclear copper A center (CU(A)) of subunit 2 and heme A of subunit 1 to the active site in subunit 1, a binuclear center (BNC) formed by heme A3 and copper B (CU(B)). The BNC reduces molecular oxygen to 2 water molecules using 4 electrons from cytochrome c in the IMS and 4 protons from the mitochondrial matrix.</text>
</comment>
<comment type="catalytic activity">
    <reaction evidence="4">
        <text>4 Fe(II)-[cytochrome c] + O2 + 8 H(+)(in) = 4 Fe(III)-[cytochrome c] + 2 H2O + 4 H(+)(out)</text>
        <dbReference type="Rhea" id="RHEA:11436"/>
        <dbReference type="Rhea" id="RHEA-COMP:10350"/>
        <dbReference type="Rhea" id="RHEA-COMP:14399"/>
        <dbReference type="ChEBI" id="CHEBI:15377"/>
        <dbReference type="ChEBI" id="CHEBI:15378"/>
        <dbReference type="ChEBI" id="CHEBI:15379"/>
        <dbReference type="ChEBI" id="CHEBI:29033"/>
        <dbReference type="ChEBI" id="CHEBI:29034"/>
        <dbReference type="EC" id="7.1.1.9"/>
    </reaction>
    <physiologicalReaction direction="left-to-right" evidence="4">
        <dbReference type="Rhea" id="RHEA:11437"/>
    </physiologicalReaction>
</comment>
<comment type="cofactor">
    <cofactor evidence="5">
        <name>Cu cation</name>
        <dbReference type="ChEBI" id="CHEBI:23378"/>
    </cofactor>
    <text evidence="5">Binds a dinuclear copper A center per subunit.</text>
</comment>
<comment type="subunit">
    <text evidence="2 5">Component of the cytochrome c oxidase (complex IV, CIV), a multisubunit enzyme composed of 14 subunits. The complex is composed of a catalytic core of 3 subunits MT-CO1, MT-CO2 and MT-CO3, encoded in the mitochondrial DNA, and 11 supernumerary subunits COX4I, COX5A, COX5B, COX6A, COX6B, COX6C, COX7A, COX7B, COX7C, COX8 and NDUFA4, which are encoded in the nuclear genome. The complex exists as a monomer or a dimer and forms supercomplexes (SCs) in the inner mitochondrial membrane with NADH-ubiquinone oxidoreductase (complex I, CI) and ubiquinol-cytochrome c oxidoreductase (cytochrome b-c1 complex, complex III, CIII), resulting in different assemblies (supercomplex SCI(1)III(2)IV(1) and megacomplex MCI(2)III(2)IV(2)) (By similarity). Found in a complex with TMEM177, COA6, COX18, COX20, SCO1 and SCO2. Interacts with TMEM177 in a COX20-dependent manner. Interacts with COX20. Interacts with COX16 (By similarity).</text>
</comment>
<comment type="subcellular location">
    <subcellularLocation>
        <location evidence="5">Mitochondrion inner membrane</location>
        <topology evidence="5">Multi-pass membrane protein</topology>
    </subcellularLocation>
</comment>
<comment type="similarity">
    <text evidence="6">Belongs to the cytochrome c oxidase subunit 2 family.</text>
</comment>
<name>COX2_BOSIN</name>
<dbReference type="EC" id="7.1.1.9"/>
<dbReference type="EMBL" id="U18820">
    <property type="protein sequence ID" value="AAA75607.1"/>
    <property type="molecule type" value="Genomic_DNA"/>
</dbReference>
<dbReference type="EMBL" id="AF384025">
    <property type="protein sequence ID" value="AAM45662.1"/>
    <property type="molecule type" value="Genomic_DNA"/>
</dbReference>
<dbReference type="EMBL" id="AF492350">
    <property type="protein sequence ID" value="AAQ06583.1"/>
    <property type="molecule type" value="Genomic_DNA"/>
</dbReference>
<dbReference type="EMBL" id="AY126697">
    <property type="protein sequence ID" value="AAM95733.1"/>
    <property type="molecule type" value="Genomic_DNA"/>
</dbReference>
<dbReference type="RefSeq" id="YP_052700.1">
    <property type="nucleotide sequence ID" value="NC_005971.1"/>
</dbReference>
<dbReference type="SMR" id="P68553"/>
<dbReference type="GeneID" id="2885980"/>
<dbReference type="KEGG" id="biu:2885980"/>
<dbReference type="CTD" id="4513"/>
<dbReference type="OrthoDB" id="39844at91561"/>
<dbReference type="Proteomes" id="UP000515132">
    <property type="component" value="Mitochondrion MT"/>
</dbReference>
<dbReference type="GO" id="GO:0005743">
    <property type="term" value="C:mitochondrial inner membrane"/>
    <property type="evidence" value="ECO:0007669"/>
    <property type="project" value="UniProtKB-SubCell"/>
</dbReference>
<dbReference type="GO" id="GO:0045277">
    <property type="term" value="C:respiratory chain complex IV"/>
    <property type="evidence" value="ECO:0000250"/>
    <property type="project" value="UniProtKB"/>
</dbReference>
<dbReference type="GO" id="GO:0005507">
    <property type="term" value="F:copper ion binding"/>
    <property type="evidence" value="ECO:0007669"/>
    <property type="project" value="InterPro"/>
</dbReference>
<dbReference type="GO" id="GO:0004129">
    <property type="term" value="F:cytochrome-c oxidase activity"/>
    <property type="evidence" value="ECO:0007669"/>
    <property type="project" value="UniProtKB-EC"/>
</dbReference>
<dbReference type="GO" id="GO:0042773">
    <property type="term" value="P:ATP synthesis coupled electron transport"/>
    <property type="evidence" value="ECO:0007669"/>
    <property type="project" value="TreeGrafter"/>
</dbReference>
<dbReference type="CDD" id="cd13912">
    <property type="entry name" value="CcO_II_C"/>
    <property type="match status" value="1"/>
</dbReference>
<dbReference type="FunFam" id="1.10.287.90:FF:000001">
    <property type="entry name" value="Cytochrome c oxidase subunit 2"/>
    <property type="match status" value="1"/>
</dbReference>
<dbReference type="FunFam" id="2.60.40.420:FF:000001">
    <property type="entry name" value="Cytochrome c oxidase subunit 2"/>
    <property type="match status" value="1"/>
</dbReference>
<dbReference type="Gene3D" id="1.10.287.90">
    <property type="match status" value="1"/>
</dbReference>
<dbReference type="Gene3D" id="2.60.40.420">
    <property type="entry name" value="Cupredoxins - blue copper proteins"/>
    <property type="match status" value="1"/>
</dbReference>
<dbReference type="InterPro" id="IPR045187">
    <property type="entry name" value="CcO_II"/>
</dbReference>
<dbReference type="InterPro" id="IPR002429">
    <property type="entry name" value="CcO_II-like_C"/>
</dbReference>
<dbReference type="InterPro" id="IPR034210">
    <property type="entry name" value="CcO_II_C"/>
</dbReference>
<dbReference type="InterPro" id="IPR001505">
    <property type="entry name" value="Copper_CuA"/>
</dbReference>
<dbReference type="InterPro" id="IPR008972">
    <property type="entry name" value="Cupredoxin"/>
</dbReference>
<dbReference type="InterPro" id="IPR014222">
    <property type="entry name" value="Cyt_c_oxidase_su2"/>
</dbReference>
<dbReference type="InterPro" id="IPR011759">
    <property type="entry name" value="Cyt_c_oxidase_su2_TM_dom"/>
</dbReference>
<dbReference type="InterPro" id="IPR036257">
    <property type="entry name" value="Cyt_c_oxidase_su2_TM_sf"/>
</dbReference>
<dbReference type="NCBIfam" id="TIGR02866">
    <property type="entry name" value="CoxB"/>
    <property type="match status" value="1"/>
</dbReference>
<dbReference type="PANTHER" id="PTHR22888:SF9">
    <property type="entry name" value="CYTOCHROME C OXIDASE SUBUNIT 2"/>
    <property type="match status" value="1"/>
</dbReference>
<dbReference type="PANTHER" id="PTHR22888">
    <property type="entry name" value="CYTOCHROME C OXIDASE, SUBUNIT II"/>
    <property type="match status" value="1"/>
</dbReference>
<dbReference type="Pfam" id="PF00116">
    <property type="entry name" value="COX2"/>
    <property type="match status" value="1"/>
</dbReference>
<dbReference type="Pfam" id="PF02790">
    <property type="entry name" value="COX2_TM"/>
    <property type="match status" value="1"/>
</dbReference>
<dbReference type="PRINTS" id="PR01166">
    <property type="entry name" value="CYCOXIDASEII"/>
</dbReference>
<dbReference type="SUPFAM" id="SSF49503">
    <property type="entry name" value="Cupredoxins"/>
    <property type="match status" value="1"/>
</dbReference>
<dbReference type="SUPFAM" id="SSF81464">
    <property type="entry name" value="Cytochrome c oxidase subunit II-like, transmembrane region"/>
    <property type="match status" value="1"/>
</dbReference>
<dbReference type="PROSITE" id="PS00078">
    <property type="entry name" value="COX2"/>
    <property type="match status" value="1"/>
</dbReference>
<dbReference type="PROSITE" id="PS50857">
    <property type="entry name" value="COX2_CUA"/>
    <property type="match status" value="1"/>
</dbReference>
<dbReference type="PROSITE" id="PS50999">
    <property type="entry name" value="COX2_TM"/>
    <property type="match status" value="1"/>
</dbReference>